<protein>
    <recommendedName>
        <fullName>Superoxide dismutase [Fe]</fullName>
        <ecNumber>1.15.1.1</ecNumber>
    </recommendedName>
</protein>
<proteinExistence type="inferred from homology"/>
<dbReference type="EC" id="1.15.1.1"/>
<dbReference type="EMBL" id="X76692">
    <property type="protein sequence ID" value="CAA54123.1"/>
    <property type="molecule type" value="Genomic_DNA"/>
</dbReference>
<dbReference type="EMBL" id="AL111168">
    <property type="protein sequence ID" value="CAL34339.1"/>
    <property type="molecule type" value="Genomic_DNA"/>
</dbReference>
<dbReference type="PIR" id="H81434">
    <property type="entry name" value="H81434"/>
</dbReference>
<dbReference type="RefSeq" id="WP_002851662.1">
    <property type="nucleotide sequence ID" value="NZ_SZUC01000006.1"/>
</dbReference>
<dbReference type="RefSeq" id="YP_002343628.1">
    <property type="nucleotide sequence ID" value="NC_002163.1"/>
</dbReference>
<dbReference type="SMR" id="Q0PBW9"/>
<dbReference type="IntAct" id="Q0PBW9">
    <property type="interactions" value="7"/>
</dbReference>
<dbReference type="STRING" id="192222.Cj0169"/>
<dbReference type="PaxDb" id="192222-Cj0169"/>
<dbReference type="EnsemblBacteria" id="CAL34339">
    <property type="protein sequence ID" value="CAL34339"/>
    <property type="gene ID" value="Cj0169"/>
</dbReference>
<dbReference type="GeneID" id="904414"/>
<dbReference type="KEGG" id="cje:Cj0169"/>
<dbReference type="PATRIC" id="fig|192222.6.peg.166"/>
<dbReference type="eggNOG" id="COG0605">
    <property type="taxonomic scope" value="Bacteria"/>
</dbReference>
<dbReference type="HOGENOM" id="CLU_031625_0_0_7"/>
<dbReference type="OrthoDB" id="9803125at2"/>
<dbReference type="Proteomes" id="UP000000799">
    <property type="component" value="Chromosome"/>
</dbReference>
<dbReference type="GO" id="GO:0046872">
    <property type="term" value="F:metal ion binding"/>
    <property type="evidence" value="ECO:0007669"/>
    <property type="project" value="UniProtKB-KW"/>
</dbReference>
<dbReference type="GO" id="GO:0004784">
    <property type="term" value="F:superoxide dismutase activity"/>
    <property type="evidence" value="ECO:0007669"/>
    <property type="project" value="UniProtKB-EC"/>
</dbReference>
<dbReference type="FunFam" id="1.10.287.990:FF:000002">
    <property type="entry name" value="Superoxide dismutase"/>
    <property type="match status" value="1"/>
</dbReference>
<dbReference type="Gene3D" id="1.10.287.990">
    <property type="entry name" value="Fe,Mn superoxide dismutase (SOD) domain"/>
    <property type="match status" value="1"/>
</dbReference>
<dbReference type="Gene3D" id="3.55.40.20">
    <property type="entry name" value="Iron/manganese superoxide dismutase, C-terminal domain"/>
    <property type="match status" value="1"/>
</dbReference>
<dbReference type="InterPro" id="IPR001189">
    <property type="entry name" value="Mn/Fe_SOD"/>
</dbReference>
<dbReference type="InterPro" id="IPR019833">
    <property type="entry name" value="Mn/Fe_SOD_BS"/>
</dbReference>
<dbReference type="InterPro" id="IPR019832">
    <property type="entry name" value="Mn/Fe_SOD_C"/>
</dbReference>
<dbReference type="InterPro" id="IPR019831">
    <property type="entry name" value="Mn/Fe_SOD_N"/>
</dbReference>
<dbReference type="InterPro" id="IPR036324">
    <property type="entry name" value="Mn/Fe_SOD_N_sf"/>
</dbReference>
<dbReference type="InterPro" id="IPR036314">
    <property type="entry name" value="SOD_C_sf"/>
</dbReference>
<dbReference type="PANTHER" id="PTHR42769">
    <property type="entry name" value="SUPEROXIDE DISMUTASE"/>
    <property type="match status" value="1"/>
</dbReference>
<dbReference type="PANTHER" id="PTHR42769:SF3">
    <property type="entry name" value="SUPEROXIDE DISMUTASE [FE] 2, CHLOROPLASTIC"/>
    <property type="match status" value="1"/>
</dbReference>
<dbReference type="Pfam" id="PF02777">
    <property type="entry name" value="Sod_Fe_C"/>
    <property type="match status" value="1"/>
</dbReference>
<dbReference type="Pfam" id="PF00081">
    <property type="entry name" value="Sod_Fe_N"/>
    <property type="match status" value="1"/>
</dbReference>
<dbReference type="PIRSF" id="PIRSF000349">
    <property type="entry name" value="SODismutase"/>
    <property type="match status" value="1"/>
</dbReference>
<dbReference type="PRINTS" id="PR01703">
    <property type="entry name" value="MNSODISMTASE"/>
</dbReference>
<dbReference type="SUPFAM" id="SSF54719">
    <property type="entry name" value="Fe,Mn superoxide dismutase (SOD), C-terminal domain"/>
    <property type="match status" value="1"/>
</dbReference>
<dbReference type="SUPFAM" id="SSF46609">
    <property type="entry name" value="Fe,Mn superoxide dismutase (SOD), N-terminal domain"/>
    <property type="match status" value="1"/>
</dbReference>
<dbReference type="PROSITE" id="PS00088">
    <property type="entry name" value="SOD_MN"/>
    <property type="match status" value="1"/>
</dbReference>
<organism>
    <name type="scientific">Campylobacter jejuni subsp. jejuni serotype O:2 (strain ATCC 700819 / NCTC 11168)</name>
    <dbReference type="NCBI Taxonomy" id="192222"/>
    <lineage>
        <taxon>Bacteria</taxon>
        <taxon>Pseudomonadati</taxon>
        <taxon>Campylobacterota</taxon>
        <taxon>Epsilonproteobacteria</taxon>
        <taxon>Campylobacterales</taxon>
        <taxon>Campylobacteraceae</taxon>
        <taxon>Campylobacter</taxon>
    </lineage>
</organism>
<reference key="1">
    <citation type="journal article" date="1994" name="Microbiology">
        <title>Cloning, nucleotide sequence and characterization of a gene encoding superoxide dismutase from Campylobacter jejuni and Campylobacter coli.</title>
        <authorList>
            <person name="Purdy D."/>
            <person name="Park S.F."/>
        </authorList>
    </citation>
    <scope>NUCLEOTIDE SEQUENCE [GENOMIC DNA]</scope>
    <source>
        <strain>ATCC 33560 / CIP 702 / DSM 4688 / NCTC 11351</strain>
    </source>
</reference>
<reference key="2">
    <citation type="journal article" date="2000" name="Nature">
        <title>The genome sequence of the food-borne pathogen Campylobacter jejuni reveals hypervariable sequences.</title>
        <authorList>
            <person name="Parkhill J."/>
            <person name="Wren B.W."/>
            <person name="Mungall K.L."/>
            <person name="Ketley J.M."/>
            <person name="Churcher C.M."/>
            <person name="Basham D."/>
            <person name="Chillingworth T."/>
            <person name="Davies R.M."/>
            <person name="Feltwell T."/>
            <person name="Holroyd S."/>
            <person name="Jagels K."/>
            <person name="Karlyshev A.V."/>
            <person name="Moule S."/>
            <person name="Pallen M.J."/>
            <person name="Penn C.W."/>
            <person name="Quail M.A."/>
            <person name="Rajandream M.A."/>
            <person name="Rutherford K.M."/>
            <person name="van Vliet A.H.M."/>
            <person name="Whitehead S."/>
            <person name="Barrell B.G."/>
        </authorList>
    </citation>
    <scope>NUCLEOTIDE SEQUENCE [LARGE SCALE GENOMIC DNA]</scope>
    <source>
        <strain>ATCC 700819 / NCTC 11168</strain>
    </source>
</reference>
<evidence type="ECO:0000250" key="1"/>
<evidence type="ECO:0000305" key="2"/>
<name>SODF_CAMJE</name>
<keyword id="KW-0408">Iron</keyword>
<keyword id="KW-0479">Metal-binding</keyword>
<keyword id="KW-0560">Oxidoreductase</keyword>
<keyword id="KW-1185">Reference proteome</keyword>
<feature type="chain" id="PRO_0000159976" description="Superoxide dismutase [Fe]">
    <location>
        <begin position="1"/>
        <end position="220"/>
    </location>
</feature>
<feature type="binding site" evidence="1">
    <location>
        <position position="26"/>
    </location>
    <ligand>
        <name>Fe cation</name>
        <dbReference type="ChEBI" id="CHEBI:24875"/>
    </ligand>
</feature>
<feature type="binding site" evidence="1">
    <location>
        <position position="73"/>
    </location>
    <ligand>
        <name>Fe cation</name>
        <dbReference type="ChEBI" id="CHEBI:24875"/>
    </ligand>
</feature>
<feature type="binding site" evidence="1">
    <location>
        <position position="164"/>
    </location>
    <ligand>
        <name>Fe cation</name>
        <dbReference type="ChEBI" id="CHEBI:24875"/>
    </ligand>
</feature>
<feature type="binding site" evidence="1">
    <location>
        <position position="168"/>
    </location>
    <ligand>
        <name>Fe cation</name>
        <dbReference type="ChEBI" id="CHEBI:24875"/>
    </ligand>
</feature>
<feature type="sequence conflict" description="In Ref. 1; CAA54123." evidence="2" ref="1">
    <original>I</original>
    <variation>N</variation>
    <location>
        <position position="153"/>
    </location>
</feature>
<feature type="sequence conflict" description="In Ref. 1; CAA54123." evidence="2" ref="1">
    <original>P</original>
    <variation>S</variation>
    <location>
        <position position="218"/>
    </location>
</feature>
<sequence length="220" mass="24813">MFELRKLPYDTNAFGDFLSAETFSYHHGKHHNTYVTNLNNLIKDTEFAGKDLVSIIKTSNGGVFNNAAQVYNHDFYFDCIKPSTGCGCGGSCQSIDANLQAALEKEFGSLENFKAEFIKGATGVFGSGWFWLVYNTKNQKLEFVGTSNAATPITEDKVPLLVVDVWEHAYYVDHRNARPAYLEKFYAHINWEFVAKAYEWALKEGMGSVSFYANELHPVK</sequence>
<gene>
    <name type="primary">sodB</name>
    <name type="ordered locus">Cj0169</name>
</gene>
<comment type="function">
    <text>Destroys superoxide anion radicals which are normally produced within the cells and which are toxic to biological systems.</text>
</comment>
<comment type="catalytic activity">
    <reaction>
        <text>2 superoxide + 2 H(+) = H2O2 + O2</text>
        <dbReference type="Rhea" id="RHEA:20696"/>
        <dbReference type="ChEBI" id="CHEBI:15378"/>
        <dbReference type="ChEBI" id="CHEBI:15379"/>
        <dbReference type="ChEBI" id="CHEBI:16240"/>
        <dbReference type="ChEBI" id="CHEBI:18421"/>
        <dbReference type="EC" id="1.15.1.1"/>
    </reaction>
</comment>
<comment type="cofactor">
    <cofactor evidence="1">
        <name>Fe cation</name>
        <dbReference type="ChEBI" id="CHEBI:24875"/>
    </cofactor>
    <text evidence="1">Binds 1 Fe cation per subunit.</text>
</comment>
<comment type="subunit">
    <text evidence="1">Homodimer.</text>
</comment>
<comment type="similarity">
    <text evidence="2">Belongs to the iron/manganese superoxide dismutase family.</text>
</comment>
<accession>Q0PBW9</accession>
<accession>P53640</accession>